<name>GCSPA_BEII9</name>
<accession>B2IGK3</accession>
<reference key="1">
    <citation type="journal article" date="2010" name="J. Bacteriol.">
        <title>Complete genome sequence of Beijerinckia indica subsp. indica.</title>
        <authorList>
            <person name="Tamas I."/>
            <person name="Dedysh S.N."/>
            <person name="Liesack W."/>
            <person name="Stott M.B."/>
            <person name="Alam M."/>
            <person name="Murrell J.C."/>
            <person name="Dunfield P.F."/>
        </authorList>
    </citation>
    <scope>NUCLEOTIDE SEQUENCE [LARGE SCALE GENOMIC DNA]</scope>
    <source>
        <strain>ATCC 9039 / DSM 1715 / NCIMB 8712</strain>
    </source>
</reference>
<comment type="function">
    <text evidence="1">The glycine cleavage system catalyzes the degradation of glycine. The P protein binds the alpha-amino group of glycine through its pyridoxal phosphate cofactor; CO(2) is released and the remaining methylamine moiety is then transferred to the lipoamide cofactor of the H protein.</text>
</comment>
<comment type="catalytic activity">
    <reaction evidence="1">
        <text>N(6)-[(R)-lipoyl]-L-lysyl-[glycine-cleavage complex H protein] + glycine + H(+) = N(6)-[(R)-S(8)-aminomethyldihydrolipoyl]-L-lysyl-[glycine-cleavage complex H protein] + CO2</text>
        <dbReference type="Rhea" id="RHEA:24304"/>
        <dbReference type="Rhea" id="RHEA-COMP:10494"/>
        <dbReference type="Rhea" id="RHEA-COMP:10495"/>
        <dbReference type="ChEBI" id="CHEBI:15378"/>
        <dbReference type="ChEBI" id="CHEBI:16526"/>
        <dbReference type="ChEBI" id="CHEBI:57305"/>
        <dbReference type="ChEBI" id="CHEBI:83099"/>
        <dbReference type="ChEBI" id="CHEBI:83143"/>
        <dbReference type="EC" id="1.4.4.2"/>
    </reaction>
</comment>
<comment type="subunit">
    <text evidence="1">The glycine cleavage system is composed of four proteins: P, T, L and H. In this organism, the P 'protein' is a heterodimer of two subunits.</text>
</comment>
<comment type="similarity">
    <text evidence="1">Belongs to the GcvP family. N-terminal subunit subfamily.</text>
</comment>
<protein>
    <recommendedName>
        <fullName evidence="1">Probable glycine dehydrogenase (decarboxylating) subunit 1</fullName>
        <ecNumber evidence="1">1.4.4.2</ecNumber>
    </recommendedName>
    <alternativeName>
        <fullName evidence="1">Glycine cleavage system P-protein subunit 1</fullName>
    </alternativeName>
    <alternativeName>
        <fullName evidence="1">Glycine decarboxylase subunit 1</fullName>
    </alternativeName>
    <alternativeName>
        <fullName evidence="1">Glycine dehydrogenase (aminomethyl-transferring) subunit 1</fullName>
    </alternativeName>
</protein>
<gene>
    <name evidence="1" type="primary">gcvPA</name>
    <name type="ordered locus">Bind_0735</name>
</gene>
<keyword id="KW-0560">Oxidoreductase</keyword>
<keyword id="KW-1185">Reference proteome</keyword>
<proteinExistence type="inferred from homology"/>
<sequence length="447" mass="48031">MRYLPLTPEDRTEMLARVGVPSVDALFEDIPAAKRLVELPDLPLHKGELEVERWLGRLSAKNLAASAAPFFVGAGAYKHHVPASVDHLIQRSEFMTSYTPYQPEIAQGTLQYVFEFQTQVAALTGMEVANASMYDGSTATGEAVLMAHRLTKRGKAILSGGLHPHYAQVVTSQAALTGHDVVVMPPDLQAKEDLVGRLDAQTSCLVVQSPDVFGNLRDLEPLAEACRKQGVLLIAVFTEAVSLGLVKAPGDMGADIVVGEGQSIGNALNFGGPYVGLFATRSKYLRQMPGRLCGETLDADGRRGFVLTLSTREQHIRRDKATSNICTNSGLCCLAFTIHLTLLGEQGLRQLATINHAHAVDLADRLAKVPGVELLNETFFNEFTIRLPGRAEDHVEALAAQGILAGVPVSRLLPGQGCDDLLIIASTEVNSDDDRAALVDALAKQIA</sequence>
<organism>
    <name type="scientific">Beijerinckia indica subsp. indica (strain ATCC 9039 / DSM 1715 / NCIMB 8712)</name>
    <dbReference type="NCBI Taxonomy" id="395963"/>
    <lineage>
        <taxon>Bacteria</taxon>
        <taxon>Pseudomonadati</taxon>
        <taxon>Pseudomonadota</taxon>
        <taxon>Alphaproteobacteria</taxon>
        <taxon>Hyphomicrobiales</taxon>
        <taxon>Beijerinckiaceae</taxon>
        <taxon>Beijerinckia</taxon>
    </lineage>
</organism>
<dbReference type="EC" id="1.4.4.2" evidence="1"/>
<dbReference type="EMBL" id="CP001016">
    <property type="protein sequence ID" value="ACB94385.1"/>
    <property type="molecule type" value="Genomic_DNA"/>
</dbReference>
<dbReference type="RefSeq" id="WP_012383742.1">
    <property type="nucleotide sequence ID" value="NC_010581.1"/>
</dbReference>
<dbReference type="SMR" id="B2IGK3"/>
<dbReference type="STRING" id="395963.Bind_0735"/>
<dbReference type="KEGG" id="bid:Bind_0735"/>
<dbReference type="eggNOG" id="COG0403">
    <property type="taxonomic scope" value="Bacteria"/>
</dbReference>
<dbReference type="HOGENOM" id="CLU_004620_0_2_5"/>
<dbReference type="OrthoDB" id="9801272at2"/>
<dbReference type="Proteomes" id="UP000001695">
    <property type="component" value="Chromosome"/>
</dbReference>
<dbReference type="GO" id="GO:0004375">
    <property type="term" value="F:glycine dehydrogenase (decarboxylating) activity"/>
    <property type="evidence" value="ECO:0007669"/>
    <property type="project" value="UniProtKB-EC"/>
</dbReference>
<dbReference type="GO" id="GO:0019464">
    <property type="term" value="P:glycine decarboxylation via glycine cleavage system"/>
    <property type="evidence" value="ECO:0007669"/>
    <property type="project" value="UniProtKB-UniRule"/>
</dbReference>
<dbReference type="GO" id="GO:0009116">
    <property type="term" value="P:nucleoside metabolic process"/>
    <property type="evidence" value="ECO:0007669"/>
    <property type="project" value="InterPro"/>
</dbReference>
<dbReference type="Gene3D" id="3.90.1150.10">
    <property type="entry name" value="Aspartate Aminotransferase, domain 1"/>
    <property type="match status" value="1"/>
</dbReference>
<dbReference type="Gene3D" id="3.40.640.10">
    <property type="entry name" value="Type I PLP-dependent aspartate aminotransferase-like (Major domain)"/>
    <property type="match status" value="1"/>
</dbReference>
<dbReference type="HAMAP" id="MF_00712">
    <property type="entry name" value="GcvPA"/>
    <property type="match status" value="1"/>
</dbReference>
<dbReference type="InterPro" id="IPR023010">
    <property type="entry name" value="GcvPA"/>
</dbReference>
<dbReference type="InterPro" id="IPR049315">
    <property type="entry name" value="GDC-P_N"/>
</dbReference>
<dbReference type="InterPro" id="IPR015424">
    <property type="entry name" value="PyrdxlP-dep_Trfase"/>
</dbReference>
<dbReference type="InterPro" id="IPR015421">
    <property type="entry name" value="PyrdxlP-dep_Trfase_major"/>
</dbReference>
<dbReference type="InterPro" id="IPR015422">
    <property type="entry name" value="PyrdxlP-dep_Trfase_small"/>
</dbReference>
<dbReference type="NCBIfam" id="NF001696">
    <property type="entry name" value="PRK00451.1"/>
    <property type="match status" value="1"/>
</dbReference>
<dbReference type="PANTHER" id="PTHR42806">
    <property type="entry name" value="GLYCINE CLEAVAGE SYSTEM P-PROTEIN"/>
    <property type="match status" value="1"/>
</dbReference>
<dbReference type="PANTHER" id="PTHR42806:SF1">
    <property type="entry name" value="GLYCINE DEHYDROGENASE (DECARBOXYLATING)"/>
    <property type="match status" value="1"/>
</dbReference>
<dbReference type="Pfam" id="PF02347">
    <property type="entry name" value="GDC-P"/>
    <property type="match status" value="1"/>
</dbReference>
<dbReference type="PIRSF" id="PIRSF006815">
    <property type="entry name" value="GcvPA"/>
    <property type="match status" value="1"/>
</dbReference>
<dbReference type="SUPFAM" id="SSF53383">
    <property type="entry name" value="PLP-dependent transferases"/>
    <property type="match status" value="1"/>
</dbReference>
<feature type="chain" id="PRO_1000132472" description="Probable glycine dehydrogenase (decarboxylating) subunit 1">
    <location>
        <begin position="1"/>
        <end position="447"/>
    </location>
</feature>
<evidence type="ECO:0000255" key="1">
    <source>
        <dbReference type="HAMAP-Rule" id="MF_00712"/>
    </source>
</evidence>